<evidence type="ECO:0000250" key="1">
    <source>
        <dbReference type="UniProtKB" id="Q6TEC1"/>
    </source>
</evidence>
<evidence type="ECO:0000250" key="2">
    <source>
        <dbReference type="UniProtKB" id="Q96DE0"/>
    </source>
</evidence>
<evidence type="ECO:0000255" key="3">
    <source>
        <dbReference type="PROSITE-ProRule" id="PRU00794"/>
    </source>
</evidence>
<evidence type="ECO:0000269" key="4">
    <source>
    </source>
</evidence>
<evidence type="ECO:0000305" key="5"/>
<organism>
    <name type="scientific">Homalodisca vitripennis</name>
    <name type="common">Glassy-winged sharpshooter</name>
    <name type="synonym">Homalodisca coagulata</name>
    <dbReference type="NCBI Taxonomy" id="197043"/>
    <lineage>
        <taxon>Eukaryota</taxon>
        <taxon>Metazoa</taxon>
        <taxon>Ecdysozoa</taxon>
        <taxon>Arthropoda</taxon>
        <taxon>Hexapoda</taxon>
        <taxon>Insecta</taxon>
        <taxon>Pterygota</taxon>
        <taxon>Neoptera</taxon>
        <taxon>Paraneoptera</taxon>
        <taxon>Hemiptera</taxon>
        <taxon>Auchenorrhyncha</taxon>
        <taxon>Membracoidea</taxon>
        <taxon>Cicadellidae</taxon>
        <taxon>Cicadellinae</taxon>
        <taxon>Proconiini</taxon>
        <taxon>Homalodisca</taxon>
    </lineage>
</organism>
<proteinExistence type="evidence at protein level"/>
<protein>
    <recommendedName>
        <fullName>U8 snoRNA-decapping enzyme</fullName>
        <ecNumber evidence="4">3.6.1.62</ecNumber>
    </recommendedName>
    <alternativeName>
        <fullName>IDP phosphatase</fullName>
        <shortName>IDPase</shortName>
        <ecNumber evidence="2">3.6.1.64</ecNumber>
    </alternativeName>
    <alternativeName>
        <fullName>Inosine diphosphate phosphatase</fullName>
    </alternativeName>
    <alternativeName>
        <fullName>Nucleoside diphosphate-linked moiety X motif 16</fullName>
        <shortName>Nudix motif 16</shortName>
    </alternativeName>
    <alternativeName>
        <fullName>m7GpppN-mRNA hydrolase</fullName>
    </alternativeName>
</protein>
<feature type="chain" id="PRO_0000421836" description="U8 snoRNA-decapping enzyme">
    <location>
        <begin position="1"/>
        <end position="187"/>
    </location>
</feature>
<feature type="domain" description="Nudix hydrolase" evidence="3">
    <location>
        <begin position="43"/>
        <end position="187"/>
    </location>
</feature>
<feature type="short sequence motif" description="Nudix box">
    <location>
        <begin position="85"/>
        <end position="106"/>
    </location>
</feature>
<feature type="binding site" evidence="2">
    <location>
        <position position="82"/>
    </location>
    <ligand>
        <name>substrate</name>
    </ligand>
</feature>
<feature type="binding site" evidence="1">
    <location>
        <position position="84"/>
    </location>
    <ligand>
        <name>Mn(2+)</name>
        <dbReference type="ChEBI" id="CHEBI:29035"/>
        <label>1</label>
    </ligand>
</feature>
<feature type="binding site" evidence="1">
    <location>
        <position position="100"/>
    </location>
    <ligand>
        <name>Mn(2+)</name>
        <dbReference type="ChEBI" id="CHEBI:29035"/>
        <label>2</label>
    </ligand>
</feature>
<feature type="binding site" evidence="1">
    <location>
        <position position="100"/>
    </location>
    <ligand>
        <name>Mn(2+)</name>
        <dbReference type="ChEBI" id="CHEBI:29035"/>
        <label>3</label>
    </ligand>
</feature>
<feature type="binding site" evidence="1">
    <location>
        <position position="104"/>
    </location>
    <ligand>
        <name>Mn(2+)</name>
        <dbReference type="ChEBI" id="CHEBI:29035"/>
        <label>1</label>
    </ligand>
</feature>
<feature type="binding site" evidence="1">
    <location>
        <position position="104"/>
    </location>
    <ligand>
        <name>Mn(2+)</name>
        <dbReference type="ChEBI" id="CHEBI:29035"/>
        <label>3</label>
    </ligand>
</feature>
<feature type="binding site" evidence="1">
    <location>
        <position position="160"/>
    </location>
    <ligand>
        <name>Mn(2+)</name>
        <dbReference type="ChEBI" id="CHEBI:29035"/>
        <label>3</label>
    </ligand>
</feature>
<feature type="binding site" evidence="1">
    <location>
        <position position="160"/>
    </location>
    <ligand>
        <name>Mn(2+)</name>
        <dbReference type="ChEBI" id="CHEBI:29035"/>
        <label>4</label>
    </ligand>
</feature>
<feature type="splice variant" id="VSP_046049" description="In isoform 2." evidence="5">
    <location>
        <begin position="1"/>
        <end position="71"/>
    </location>
</feature>
<keyword id="KW-0025">Alternative splicing</keyword>
<keyword id="KW-0963">Cytoplasm</keyword>
<keyword id="KW-0378">Hydrolase</keyword>
<keyword id="KW-0460">Magnesium</keyword>
<keyword id="KW-0464">Manganese</keyword>
<keyword id="KW-0479">Metal-binding</keyword>
<keyword id="KW-0546">Nucleotide metabolism</keyword>
<keyword id="KW-0547">Nucleotide-binding</keyword>
<keyword id="KW-0539">Nucleus</keyword>
<keyword id="KW-0694">RNA-binding</keyword>
<geneLocation type="mitochondrion"/>
<accession>P0DKY8</accession>
<gene>
    <name type="primary">NUDT16</name>
</gene>
<sequence>MSSDTGDRTWGHLAATEHYGRITDTTDYIQVDKENLKNDPYYNSSQASHCMIFARNNKKTFGVYNPRAAILMQMRFDGNLGFPGGLVDAGEDSIKALNRELTEEMNLDTSKHSVSESSYVVTHWSISKRLCLHFYALEVSLAELYEIEKRALLAKDYGSEVLGTIRMPLYTMGDGYRGFPTFLTTPS</sequence>
<dbReference type="EC" id="3.6.1.62" evidence="4"/>
<dbReference type="EC" id="3.6.1.64" evidence="2"/>
<dbReference type="EMBL" id="DN199400">
    <property type="status" value="NOT_ANNOTATED_CDS"/>
    <property type="molecule type" value="mRNA"/>
</dbReference>
<dbReference type="SMR" id="P0DKY8"/>
<dbReference type="EnsemblMetazoa" id="XM_046804371.1">
    <property type="protein sequence ID" value="XP_046660327.1"/>
    <property type="gene ID" value="LOC124354133"/>
</dbReference>
<dbReference type="OrthoDB" id="5950381at2759"/>
<dbReference type="GO" id="GO:0005737">
    <property type="term" value="C:cytoplasm"/>
    <property type="evidence" value="ECO:0007669"/>
    <property type="project" value="UniProtKB-SubCell"/>
</dbReference>
<dbReference type="GO" id="GO:0005730">
    <property type="term" value="C:nucleolus"/>
    <property type="evidence" value="ECO:0007669"/>
    <property type="project" value="UniProtKB-SubCell"/>
</dbReference>
<dbReference type="GO" id="GO:0005654">
    <property type="term" value="C:nucleoplasm"/>
    <property type="evidence" value="ECO:0007669"/>
    <property type="project" value="UniProtKB-SubCell"/>
</dbReference>
<dbReference type="GO" id="GO:0140933">
    <property type="term" value="F:5'-(N(7)-methylguanosine 5'-triphospho)-[mRNA] hydrolase activity"/>
    <property type="evidence" value="ECO:0007669"/>
    <property type="project" value="UniProtKB-EC"/>
</dbReference>
<dbReference type="GO" id="GO:0097383">
    <property type="term" value="F:dIDP phosphatase activity"/>
    <property type="evidence" value="ECO:0007669"/>
    <property type="project" value="RHEA"/>
</dbReference>
<dbReference type="GO" id="GO:1990003">
    <property type="term" value="F:IDP phosphatase activity"/>
    <property type="evidence" value="ECO:0007669"/>
    <property type="project" value="UniProtKB-EC"/>
</dbReference>
<dbReference type="GO" id="GO:0046872">
    <property type="term" value="F:metal ion binding"/>
    <property type="evidence" value="ECO:0007669"/>
    <property type="project" value="UniProtKB-KW"/>
</dbReference>
<dbReference type="GO" id="GO:0000166">
    <property type="term" value="F:nucleotide binding"/>
    <property type="evidence" value="ECO:0007669"/>
    <property type="project" value="UniProtKB-KW"/>
</dbReference>
<dbReference type="GO" id="GO:1990174">
    <property type="term" value="F:phosphodiesterase decapping endonuclease activity"/>
    <property type="evidence" value="ECO:0007669"/>
    <property type="project" value="TreeGrafter"/>
</dbReference>
<dbReference type="GO" id="GO:0030515">
    <property type="term" value="F:snoRNA binding"/>
    <property type="evidence" value="ECO:0007669"/>
    <property type="project" value="TreeGrafter"/>
</dbReference>
<dbReference type="GO" id="GO:0006402">
    <property type="term" value="P:mRNA catabolic process"/>
    <property type="evidence" value="ECO:0007669"/>
    <property type="project" value="TreeGrafter"/>
</dbReference>
<dbReference type="GO" id="GO:0009117">
    <property type="term" value="P:nucleotide metabolic process"/>
    <property type="evidence" value="ECO:0007669"/>
    <property type="project" value="UniProtKB-KW"/>
</dbReference>
<dbReference type="GO" id="GO:0016077">
    <property type="term" value="P:sno(s)RNA catabolic process"/>
    <property type="evidence" value="ECO:0007669"/>
    <property type="project" value="TreeGrafter"/>
</dbReference>
<dbReference type="Gene3D" id="3.90.79.10">
    <property type="entry name" value="Nucleoside Triphosphate Pyrophosphohydrolase"/>
    <property type="match status" value="1"/>
</dbReference>
<dbReference type="InterPro" id="IPR015797">
    <property type="entry name" value="NUDIX_hydrolase-like_dom_sf"/>
</dbReference>
<dbReference type="InterPro" id="IPR020084">
    <property type="entry name" value="NUDIX_hydrolase_CS"/>
</dbReference>
<dbReference type="InterPro" id="IPR000086">
    <property type="entry name" value="NUDIX_hydrolase_dom"/>
</dbReference>
<dbReference type="InterPro" id="IPR054754">
    <property type="entry name" value="NudT16"/>
</dbReference>
<dbReference type="PANTHER" id="PTHR31699">
    <property type="entry name" value="NUDIX T16 FAMILY MEMBER"/>
    <property type="match status" value="1"/>
</dbReference>
<dbReference type="PANTHER" id="PTHR31699:SF1">
    <property type="entry name" value="U8 SNORNA-DECAPPING ENZYME"/>
    <property type="match status" value="1"/>
</dbReference>
<dbReference type="Pfam" id="PF22327">
    <property type="entry name" value="Nudt16-like"/>
    <property type="match status" value="1"/>
</dbReference>
<dbReference type="SUPFAM" id="SSF55811">
    <property type="entry name" value="Nudix"/>
    <property type="match status" value="1"/>
</dbReference>
<dbReference type="PROSITE" id="PS51462">
    <property type="entry name" value="NUDIX"/>
    <property type="match status" value="1"/>
</dbReference>
<dbReference type="PROSITE" id="PS00893">
    <property type="entry name" value="NUDIX_BOX"/>
    <property type="match status" value="1"/>
</dbReference>
<reference key="1">
    <citation type="submission" date="2005-02" db="EMBL/GenBank/DDBJ databases">
        <title>Expressed sequence tags from 5th Instar Glassy-winged Sharpshooter, Homalodisca coagulata (Hemiptera: Cicadellidae).</title>
        <authorList>
            <person name="Hunter W.B."/>
            <person name="Dang P.M."/>
            <person name="Puterka G."/>
            <person name="Shatters R.G."/>
            <person name="McKenzie C.L."/>
            <person name="Sinisterra X.H."/>
        </authorList>
    </citation>
    <scope>NUCLEOTIDE SEQUENCE [LARGE SCALE MRNA] (ISOFORM 1)</scope>
</reference>
<reference key="2">
    <citation type="journal article" date="2008" name="Nucleic Acids Res.">
        <title>Evolutionary conservation supports ancient origin for Nudt16, a nuclear-localized, RNA-binding, RNA-decapping enzyme.</title>
        <authorList>
            <person name="Taylor M.J."/>
            <person name="Peculis B.A."/>
        </authorList>
    </citation>
    <scope>ALTERNATIVE SPLICING (ISOFORM 2)</scope>
    <scope>FUNCTION AS A DECAPPING ENZYME</scope>
    <scope>CATALYTIC ACTIVITY</scope>
    <scope>COFACTOR</scope>
</reference>
<name>NUD16_HOMVI</name>
<comment type="function">
    <text evidence="2 4">RNA-binding and decapping enzyme that catalyzes the cleavage of the cap structure of snoRNAs in a metal-dependent manner. Has diphosphatase activity and removes m7G caps from U8 snoRNA (PubMed:18820299). May catalyze the cleavage of the cap structure on mRNAs. May also act as a phosphatase; hydrolyzes the non-canonical purine nucleotides inosine diphosphate (IDP) and deoxyinosine diphosphate (dITP) (By similarity). May bind to the U8 snoRNA.</text>
</comment>
<comment type="catalytic activity">
    <reaction evidence="4">
        <text>a 5'-end (N(7)-methyl 5'-triphosphoguanosine)-ribonucleoside in mRNA + H2O = N(7)-methyl-GDP + a 5'-end phospho-ribonucleoside in mRNA + 2 H(+)</text>
        <dbReference type="Rhea" id="RHEA:67484"/>
        <dbReference type="Rhea" id="RHEA-COMP:15692"/>
        <dbReference type="Rhea" id="RHEA-COMP:17167"/>
        <dbReference type="ChEBI" id="CHEBI:15377"/>
        <dbReference type="ChEBI" id="CHEBI:15378"/>
        <dbReference type="ChEBI" id="CHEBI:63714"/>
        <dbReference type="ChEBI" id="CHEBI:138282"/>
        <dbReference type="ChEBI" id="CHEBI:156461"/>
        <dbReference type="EC" id="3.6.1.62"/>
    </reaction>
    <physiologicalReaction direction="left-to-right" evidence="4">
        <dbReference type="Rhea" id="RHEA:67485"/>
    </physiologicalReaction>
</comment>
<comment type="catalytic activity">
    <reaction evidence="2">
        <text>IDP + H2O = IMP + phosphate + H(+)</text>
        <dbReference type="Rhea" id="RHEA:35207"/>
        <dbReference type="ChEBI" id="CHEBI:15377"/>
        <dbReference type="ChEBI" id="CHEBI:15378"/>
        <dbReference type="ChEBI" id="CHEBI:43474"/>
        <dbReference type="ChEBI" id="CHEBI:58053"/>
        <dbReference type="ChEBI" id="CHEBI:58280"/>
        <dbReference type="EC" id="3.6.1.64"/>
    </reaction>
    <physiologicalReaction direction="left-to-right" evidence="2">
        <dbReference type="Rhea" id="RHEA:35208"/>
    </physiologicalReaction>
</comment>
<comment type="catalytic activity">
    <reaction evidence="2">
        <text>dIDP + H2O = dIMP + phosphate + H(+)</text>
        <dbReference type="Rhea" id="RHEA:35211"/>
        <dbReference type="ChEBI" id="CHEBI:15377"/>
        <dbReference type="ChEBI" id="CHEBI:15378"/>
        <dbReference type="ChEBI" id="CHEBI:43474"/>
        <dbReference type="ChEBI" id="CHEBI:61194"/>
        <dbReference type="ChEBI" id="CHEBI:62286"/>
        <dbReference type="EC" id="3.6.1.64"/>
    </reaction>
    <physiologicalReaction direction="left-to-right" evidence="2">
        <dbReference type="Rhea" id="RHEA:35212"/>
    </physiologicalReaction>
</comment>
<comment type="cofactor">
    <cofactor evidence="4">
        <name>Mg(2+)</name>
        <dbReference type="ChEBI" id="CHEBI:18420"/>
    </cofactor>
    <cofactor evidence="4">
        <name>Mn(2+)</name>
        <dbReference type="ChEBI" id="CHEBI:29035"/>
    </cofactor>
    <cofactor evidence="4">
        <name>Co(2+)</name>
        <dbReference type="ChEBI" id="CHEBI:48828"/>
    </cofactor>
    <text evidence="4">Decapping activity is higher in the presence of manganese than in Magnesium or cobalt.</text>
</comment>
<comment type="subunit">
    <text evidence="2">Homodimer.</text>
</comment>
<comment type="subcellular location">
    <subcellularLocation>
        <location evidence="2">Nucleus</location>
    </subcellularLocation>
    <subcellularLocation>
        <location evidence="1">Nucleus</location>
        <location evidence="1">Nucleolus</location>
    </subcellularLocation>
    <subcellularLocation>
        <location evidence="1">Nucleus</location>
        <location evidence="1">Nucleoplasm</location>
    </subcellularLocation>
    <subcellularLocation>
        <location evidence="2">Cytoplasm</location>
    </subcellularLocation>
</comment>
<comment type="alternative products">
    <event type="alternative splicing"/>
    <isoform>
        <id>P0DKY8-1</id>
        <name>1</name>
        <sequence type="displayed"/>
    </isoform>
    <isoform>
        <id>P0DKY8-2</id>
        <name>2</name>
        <sequence type="described" ref="VSP_046049"/>
    </isoform>
</comment>
<comment type="similarity">
    <text evidence="5">Belongs to the Nudix hydrolase family. NUDT16 subfamily.</text>
</comment>